<comment type="function">
    <text evidence="2 6">Transcription activator involved in oxidative stress response and redox homeostasis (PubMed:25445311). Regulates the transcription of genes encoding antioxidant enzymes and components of the cellular thiol-reducing pathways (By similarity). Involved in antifungal resistance to fluconazole (PubMed:25445311).</text>
</comment>
<comment type="subcellular location">
    <subcellularLocation>
        <location evidence="2">Nucleus</location>
    </subcellularLocation>
    <subcellularLocation>
        <location evidence="2">Cytoplasm</location>
    </subcellularLocation>
    <text evidence="2">The nuclear localization is oxidative stress-dependent and oxidized yap1 is found predominantly in the nucleus, while reduced yap1 is continuously exported to the cytoplasm.</text>
</comment>
<comment type="domain">
    <text evidence="1">Contains two cysteine rich domains (CRD), referred to as the N- and C-terminal CRD's, n-CRD and c-CRD, respectively. A nuclear export signal is embedded in the c-CRD, with which the nuclear export proteins interact only in the absence of disulfide bonds (or otherwise oxidized cysteines) within the c-CRD or between the c-CRD and the n-CRD.</text>
</comment>
<comment type="PTM">
    <text evidence="1">Depending on the oxidative stress inducing agent, yap1 can undergo two distinct conformational changes, both involving disulfide bond formation, and both masking the nuclear export signal, thus abolishing nuclear export.</text>
</comment>
<comment type="disruption phenotype">
    <text evidence="6">Does not affect virulence.</text>
</comment>
<comment type="similarity">
    <text evidence="8">Belongs to the bZIP family. YAP subfamily.</text>
</comment>
<dbReference type="EMBL" id="CP003820">
    <property type="protein sequence ID" value="AFR92373.2"/>
    <property type="molecule type" value="Genomic_DNA"/>
</dbReference>
<dbReference type="RefSeq" id="XP_012046219.1">
    <property type="nucleotide sequence ID" value="XM_012190829.1"/>
</dbReference>
<dbReference type="SMR" id="J9VEC2"/>
<dbReference type="GeneID" id="23884065"/>
<dbReference type="KEGG" id="cng:CNAG_00239"/>
<dbReference type="VEuPathDB" id="FungiDB:CNAG_00239"/>
<dbReference type="HOGENOM" id="CLU_395967_0_0_1"/>
<dbReference type="OrthoDB" id="7247at5206"/>
<dbReference type="Proteomes" id="UP000010091">
    <property type="component" value="Chromosome 1"/>
</dbReference>
<dbReference type="GO" id="GO:0005737">
    <property type="term" value="C:cytoplasm"/>
    <property type="evidence" value="ECO:0007669"/>
    <property type="project" value="UniProtKB-SubCell"/>
</dbReference>
<dbReference type="GO" id="GO:0090575">
    <property type="term" value="C:RNA polymerase II transcription regulator complex"/>
    <property type="evidence" value="ECO:0007669"/>
    <property type="project" value="TreeGrafter"/>
</dbReference>
<dbReference type="GO" id="GO:0001228">
    <property type="term" value="F:DNA-binding transcription activator activity, RNA polymerase II-specific"/>
    <property type="evidence" value="ECO:0007669"/>
    <property type="project" value="TreeGrafter"/>
</dbReference>
<dbReference type="GO" id="GO:0000976">
    <property type="term" value="F:transcription cis-regulatory region binding"/>
    <property type="evidence" value="ECO:0007669"/>
    <property type="project" value="InterPro"/>
</dbReference>
<dbReference type="CDD" id="cd14688">
    <property type="entry name" value="bZIP_YAP"/>
    <property type="match status" value="1"/>
</dbReference>
<dbReference type="Gene3D" id="1.20.5.170">
    <property type="match status" value="1"/>
</dbReference>
<dbReference type="Gene3D" id="1.10.238.100">
    <property type="entry name" value="YAP1 redox domain. Chain B"/>
    <property type="match status" value="1"/>
</dbReference>
<dbReference type="InterPro" id="IPR050936">
    <property type="entry name" value="AP-1-like"/>
</dbReference>
<dbReference type="InterPro" id="IPR004827">
    <property type="entry name" value="bZIP"/>
</dbReference>
<dbReference type="InterPro" id="IPR046347">
    <property type="entry name" value="bZIP_sf"/>
</dbReference>
<dbReference type="PANTHER" id="PTHR40621:SF6">
    <property type="entry name" value="AP-1-LIKE TRANSCRIPTION FACTOR YAP1-RELATED"/>
    <property type="match status" value="1"/>
</dbReference>
<dbReference type="PANTHER" id="PTHR40621">
    <property type="entry name" value="TRANSCRIPTION FACTOR KAPC-RELATED"/>
    <property type="match status" value="1"/>
</dbReference>
<dbReference type="Pfam" id="PF00170">
    <property type="entry name" value="bZIP_1"/>
    <property type="match status" value="1"/>
</dbReference>
<dbReference type="SMART" id="SM00338">
    <property type="entry name" value="BRLZ"/>
    <property type="match status" value="1"/>
</dbReference>
<dbReference type="SUPFAM" id="SSF57959">
    <property type="entry name" value="Leucine zipper domain"/>
    <property type="match status" value="1"/>
</dbReference>
<dbReference type="PROSITE" id="PS50217">
    <property type="entry name" value="BZIP"/>
    <property type="match status" value="1"/>
</dbReference>
<dbReference type="PROSITE" id="PS00036">
    <property type="entry name" value="BZIP_BASIC"/>
    <property type="match status" value="1"/>
</dbReference>
<keyword id="KW-0963">Cytoplasm</keyword>
<keyword id="KW-1015">Disulfide bond</keyword>
<keyword id="KW-0238">DNA-binding</keyword>
<keyword id="KW-0539">Nucleus</keyword>
<keyword id="KW-0558">Oxidation</keyword>
<keyword id="KW-0804">Transcription</keyword>
<keyword id="KW-0805">Transcription regulation</keyword>
<name>AP1_CRYNH</name>
<evidence type="ECO:0000250" key="1">
    <source>
        <dbReference type="UniProtKB" id="P19880"/>
    </source>
</evidence>
<evidence type="ECO:0000250" key="2">
    <source>
        <dbReference type="UniProtKB" id="Q4WMH0"/>
    </source>
</evidence>
<evidence type="ECO:0000255" key="3">
    <source>
        <dbReference type="PROSITE-ProRule" id="PRU00768"/>
    </source>
</evidence>
<evidence type="ECO:0000255" key="4">
    <source>
        <dbReference type="PROSITE-ProRule" id="PRU00978"/>
    </source>
</evidence>
<evidence type="ECO:0000256" key="5">
    <source>
        <dbReference type="SAM" id="MobiDB-lite"/>
    </source>
</evidence>
<evidence type="ECO:0000269" key="6">
    <source>
    </source>
</evidence>
<evidence type="ECO:0000303" key="7">
    <source>
    </source>
</evidence>
<evidence type="ECO:0000305" key="8"/>
<protein>
    <recommendedName>
        <fullName evidence="7">AP-1-like transcription factor yap1</fullName>
    </recommendedName>
    <alternativeName>
        <fullName evidence="7">BZIP domain-containing transcription factor yap1</fullName>
    </alternativeName>
</protein>
<accession>J9VEC2</accession>
<reference key="1">
    <citation type="journal article" date="2014" name="PLoS Genet.">
        <title>Analysis of the genome and transcriptome of Cryptococcus neoformans var. grubii reveals complex RNA expression and microevolution leading to virulence attenuation.</title>
        <authorList>
            <person name="Janbon G."/>
            <person name="Ormerod K.L."/>
            <person name="Paulet D."/>
            <person name="Byrnes E.J. III"/>
            <person name="Yadav V."/>
            <person name="Chatterjee G."/>
            <person name="Mullapudi N."/>
            <person name="Hon C.-C."/>
            <person name="Billmyre R.B."/>
            <person name="Brunel F."/>
            <person name="Bahn Y.-S."/>
            <person name="Chen W."/>
            <person name="Chen Y."/>
            <person name="Chow E.W.L."/>
            <person name="Coppee J.-Y."/>
            <person name="Floyd-Averette A."/>
            <person name="Gaillardin C."/>
            <person name="Gerik K.J."/>
            <person name="Goldberg J."/>
            <person name="Gonzalez-Hilarion S."/>
            <person name="Gujja S."/>
            <person name="Hamlin J.L."/>
            <person name="Hsueh Y.-P."/>
            <person name="Ianiri G."/>
            <person name="Jones S."/>
            <person name="Kodira C.D."/>
            <person name="Kozubowski L."/>
            <person name="Lam W."/>
            <person name="Marra M."/>
            <person name="Mesner L.D."/>
            <person name="Mieczkowski P.A."/>
            <person name="Moyrand F."/>
            <person name="Nielsen K."/>
            <person name="Proux C."/>
            <person name="Rossignol T."/>
            <person name="Schein J.E."/>
            <person name="Sun S."/>
            <person name="Wollschlaeger C."/>
            <person name="Wood I.A."/>
            <person name="Zeng Q."/>
            <person name="Neuveglise C."/>
            <person name="Newlon C.S."/>
            <person name="Perfect J.R."/>
            <person name="Lodge J.K."/>
            <person name="Idnurm A."/>
            <person name="Stajich J.E."/>
            <person name="Kronstad J.W."/>
            <person name="Sanyal K."/>
            <person name="Heitman J."/>
            <person name="Fraser J.A."/>
            <person name="Cuomo C.A."/>
            <person name="Dietrich F.S."/>
        </authorList>
    </citation>
    <scope>NUCLEOTIDE SEQUENCE [LARGE SCALE GENOMIC DNA]</scope>
    <source>
        <strain>H99 / ATCC 208821 / CBS 10515 / FGSC 9487</strain>
    </source>
</reference>
<reference key="2">
    <citation type="journal article" date="2015" name="Fungal Genet. Biol.">
        <title>Cryptococcus neoformans Yap1 is required for normal fluconazole and oxidative stress resistance.</title>
        <authorList>
            <person name="Paul S."/>
            <person name="Doering T.L."/>
            <person name="Moye-Rowley W.S."/>
        </authorList>
    </citation>
    <scope>FUNCTION</scope>
    <scope>DISRUPTION PHENOTYPE</scope>
</reference>
<feature type="chain" id="PRO_0000449502" description="AP-1-like transcription factor yap1">
    <location>
        <begin position="1"/>
        <end position="700"/>
    </location>
</feature>
<feature type="domain" description="bZIP" evidence="4">
    <location>
        <begin position="156"/>
        <end position="219"/>
    </location>
</feature>
<feature type="region of interest" description="Disordered" evidence="5">
    <location>
        <begin position="17"/>
        <end position="185"/>
    </location>
</feature>
<feature type="region of interest" description="Basic motif" evidence="4">
    <location>
        <begin position="158"/>
        <end position="182"/>
    </location>
</feature>
<feature type="region of interest" description="Leucine-zipper" evidence="4">
    <location>
        <begin position="184"/>
        <end position="191"/>
    </location>
</feature>
<feature type="region of interest" description="Transcription activation 1" evidence="1">
    <location>
        <begin position="213"/>
        <end position="400"/>
    </location>
</feature>
<feature type="region of interest" description="Disordered" evidence="5">
    <location>
        <begin position="228"/>
        <end position="296"/>
    </location>
</feature>
<feature type="region of interest" description="n-CRD" evidence="1">
    <location>
        <begin position="306"/>
        <end position="318"/>
    </location>
</feature>
<feature type="region of interest" description="Disordered" evidence="5">
    <location>
        <begin position="320"/>
        <end position="359"/>
    </location>
</feature>
<feature type="region of interest" description="Transcription activation 2" evidence="1">
    <location>
        <begin position="452"/>
        <end position="577"/>
    </location>
</feature>
<feature type="region of interest" description="Disordered" evidence="5">
    <location>
        <begin position="542"/>
        <end position="609"/>
    </location>
</feature>
<feature type="region of interest" description="c-CRD" evidence="1">
    <location>
        <begin position="642"/>
        <end position="675"/>
    </location>
</feature>
<feature type="short sequence motif" description="Bipartite nuclear localization signal" evidence="3">
    <location>
        <begin position="34"/>
        <end position="41"/>
    </location>
</feature>
<feature type="short sequence motif" description="Bipartite nuclear localization signal" evidence="3">
    <location>
        <begin position="67"/>
        <end position="74"/>
    </location>
</feature>
<feature type="short sequence motif" description="Nuclear export signal" evidence="1">
    <location>
        <begin position="660"/>
        <end position="667"/>
    </location>
</feature>
<feature type="compositionally biased region" description="Polar residues" evidence="5">
    <location>
        <begin position="47"/>
        <end position="59"/>
    </location>
</feature>
<feature type="compositionally biased region" description="Acidic residues" evidence="5">
    <location>
        <begin position="103"/>
        <end position="112"/>
    </location>
</feature>
<feature type="compositionally biased region" description="Low complexity" evidence="5">
    <location>
        <begin position="127"/>
        <end position="138"/>
    </location>
</feature>
<feature type="compositionally biased region" description="Basic and acidic residues" evidence="5">
    <location>
        <begin position="150"/>
        <end position="185"/>
    </location>
</feature>
<feature type="compositionally biased region" description="Low complexity" evidence="5">
    <location>
        <begin position="231"/>
        <end position="244"/>
    </location>
</feature>
<feature type="compositionally biased region" description="Polar residues" evidence="5">
    <location>
        <begin position="280"/>
        <end position="296"/>
    </location>
</feature>
<feature type="compositionally biased region" description="Low complexity" evidence="5">
    <location>
        <begin position="335"/>
        <end position="358"/>
    </location>
</feature>
<feature type="compositionally biased region" description="Low complexity" evidence="5">
    <location>
        <begin position="542"/>
        <end position="573"/>
    </location>
</feature>
<feature type="compositionally biased region" description="Polar residues" evidence="5">
    <location>
        <begin position="589"/>
        <end position="607"/>
    </location>
</feature>
<feature type="disulfide bond" description="In nuclear retained form" evidence="1">
    <location>
        <begin position="666"/>
        <end position="675"/>
    </location>
</feature>
<proteinExistence type="inferred from homology"/>
<sequence>MQSALTPNTAAFLEYISPGHAPTSAPPAALFNNMPVPGRDTPEDTPPSVSNGSQPSAHQAPSDDSDSPTPEMPPAQPDDAANTDPLAGNGANKRKAGRPSAVLDDDDDDASDSDLPSGHEDKKQHGAGRAAAASASGSGRRGRKSGGGEGDGKRELSKSERRKEQNRAAQKAFRERREAKVKDLEDKVAELENKAYGTQIENENLRGILKRLQEENVALKQSAFTFSMPVNSRNSPNSNNGSFSAPAPQNRKPLTPPQSSNDDSLKAVDDIPMLPHRHSSANTISDNSSESLVSLRSTDRTPPALFSDHFNTYALGVVPVPPPSSSSQPTQKYPSASNGQQSISSNSNSSNVISPPSADQSEFNALWESLYPNDVENLVSQNASQNQGGPFTLLNSQPDSMSFASAGNNNSMNALFNFGAPSSPSISNSAQPSVNPAPASVTQPANHITQNLGATGQASDWNRFAFREPTAEASAPNWDLTDNSVNEFLASLSGDTTADATANDYLNNDDEAFNAQLRKIFGNDNSPSAAFNLPSTSFSPNNYLNMSPSPMMPLSNSQSPQSSDSRSNTNVSSGRGNDISMADSPEYSMGSSRTSVSHDSTDLQGKATTTTTTAIRSAKNYSCKSDNEVIHVVDEKGRVIKPSELWMRFGMQHENSTEHLLIDDLCDQMRAKATCKDGKMQLDITDAAVLFRRGERRPSQ</sequence>
<gene>
    <name evidence="7" type="primary">yap1</name>
    <name type="ORF">CNAG_00239</name>
</gene>
<organism>
    <name type="scientific">Cryptococcus neoformans var. grubii serotype A (strain H99 / ATCC 208821 / CBS 10515 / FGSC 9487)</name>
    <name type="common">Filobasidiella neoformans var. grubii</name>
    <dbReference type="NCBI Taxonomy" id="235443"/>
    <lineage>
        <taxon>Eukaryota</taxon>
        <taxon>Fungi</taxon>
        <taxon>Dikarya</taxon>
        <taxon>Basidiomycota</taxon>
        <taxon>Agaricomycotina</taxon>
        <taxon>Tremellomycetes</taxon>
        <taxon>Tremellales</taxon>
        <taxon>Cryptococcaceae</taxon>
        <taxon>Cryptococcus</taxon>
        <taxon>Cryptococcus neoformans species complex</taxon>
    </lineage>
</organism>